<sequence>MALLYITTAALALLLLFLRAVFKSWRIQRKLPPGPPGLPLIGNIHQIPAVRAHQKFTEWAKVYGGLYTFRIGPATAAVITDRGLVKELLDKRSALYSSRPVSYVGQNLITGGDHLLLMDNNEMWRLFRKTVHQHFKASMCEKEHVKLLEAEHTQMMRDFLLYPEKHMLHTKRTTNSIIMSLLYGIRTPSWDTPHMRELYEIMEQWSKVMETGATPPVDIFPWLRWIPQRWLGNWVDRSVEVGSGMKALYGSFRRRAIEARREAEQSSQSRARTFIDHVLDLQEKANLTDNQVDFLGGVMMEGGSDTGSTMLLVMIQALVRYPEVQERARAELDAVCGEGRSPTWADFSRLPYINMIVKETMRWRPVTPLSFPHALNQDDWVNGYLLPKGTTVFLNVWGLHHDESIFPNPERFDPSHYEGRHNLASDYAASPDYMQRDHFIYGAGRRLCPGIHLSERSMFIGAAKLLWCFQFEPEMDESGRPVAIDTDPITGYTEGFLVCPQAYKCKVSPRSTARAETIMREFAQAESEVLCQYATP</sequence>
<accession>A0A2P1DP94</accession>
<gene>
    <name evidence="5" type="primary">macC</name>
</gene>
<name>MACC_PENTR</name>
<feature type="chain" id="PRO_0000454086" description="Cytochrome P450 monooxygenase macC">
    <location>
        <begin position="1"/>
        <end position="536"/>
    </location>
</feature>
<feature type="transmembrane region" description="Helical" evidence="3">
    <location>
        <begin position="2"/>
        <end position="22"/>
    </location>
</feature>
<feature type="binding site" description="axial binding residue" evidence="2">
    <location>
        <position position="448"/>
    </location>
    <ligand>
        <name>heme</name>
        <dbReference type="ChEBI" id="CHEBI:30413"/>
    </ligand>
    <ligandPart>
        <name>Fe</name>
        <dbReference type="ChEBI" id="CHEBI:18248"/>
    </ligandPart>
</feature>
<proteinExistence type="inferred from homology"/>
<organism>
    <name type="scientific">Penicillium terrestre</name>
    <dbReference type="NCBI Taxonomy" id="374132"/>
    <lineage>
        <taxon>Eukaryota</taxon>
        <taxon>Fungi</taxon>
        <taxon>Dikarya</taxon>
        <taxon>Ascomycota</taxon>
        <taxon>Pezizomycotina</taxon>
        <taxon>Eurotiomycetes</taxon>
        <taxon>Eurotiomycetidae</taxon>
        <taxon>Eurotiales</taxon>
        <taxon>Aspergillaceae</taxon>
        <taxon>Penicillium</taxon>
    </lineage>
</organism>
<reference key="1">
    <citation type="journal article" date="2017" name="Org. Lett.">
        <title>Late-stage terpene cyclization by an integral membrane cyclase in the biosynthesis of isoprenoid epoxycyclohexenone natural products.</title>
        <authorList>
            <person name="Tang M.C."/>
            <person name="Cui X."/>
            <person name="He X."/>
            <person name="Ding Z."/>
            <person name="Zhu T."/>
            <person name="Tang Y."/>
            <person name="Li D."/>
        </authorList>
    </citation>
    <scope>NUCLEOTIDE SEQUENCE [GENOMIC DNA]</scope>
    <scope>FUNCTION</scope>
    <scope>PATHWAY</scope>
    <source>
        <strain>LM2</strain>
    </source>
</reference>
<keyword id="KW-0349">Heme</keyword>
<keyword id="KW-0408">Iron</keyword>
<keyword id="KW-0472">Membrane</keyword>
<keyword id="KW-0479">Metal-binding</keyword>
<keyword id="KW-0503">Monooxygenase</keyword>
<keyword id="KW-0560">Oxidoreductase</keyword>
<keyword id="KW-0812">Transmembrane</keyword>
<keyword id="KW-1133">Transmembrane helix</keyword>
<comment type="function">
    <text evidence="1 4">Cytochrome P450 monooxygenase; part of the gene cluster that mediates the biosynthesis of macrophorins, isoprenoid epoxycyclohexenones containing cyclized drimane moieties (PubMed:28926261). The first step of the pathway is the synthesis of 6-methylsalicylic acid (6-MSA) by the polyketide synthase macA (PubMed:28926261). 6-MSA is then converted to m-cresol by the decarboxylase macB (By similarity). The cytochrome P450 monooxygenase macC then catalyzes the oxidation of m-cresol to toluquinol (By similarity). Epoxidation of toluquinol is then performed by the short chain dehydrogenase macD, with the help of macE, and a further prenylation by macG leads to 7-deacetoxyyanuthone A (By similarity). The next step is the hydroxylation of C-22 of 7-deacetoxyyanuthone A by the cytochrome P450 monooxygenase macH to yield 22-deacetylyanuthone A (By similarity). O-Mevalon transferase macI then attaches mevalon to the hydroxyl group of 22-deacetylyanuthone A to produce yanuthone E (By similarity). The terpene cyclase macJ catalyzes the cyclization of 22-deacetylyanuthone A to macrophorin A (PubMed:28926261). MacJ is also able to catalyze cyclization of yanuthone E and 7-deacetoxyyanuthone A to their corresponding macrophorins (PubMed:28926261). The macJ products can be further modified by macH and macJ, as well as by the FAD-dependent monooxygenase macF, to produce additional macrophorins, including 4'-oxomacrophorin A, 4'-oxomacrophorin D and 4'-oxomacrophorin E (PubMed:28926261).</text>
</comment>
<comment type="cofactor">
    <cofactor evidence="2">
        <name>heme</name>
        <dbReference type="ChEBI" id="CHEBI:30413"/>
    </cofactor>
</comment>
<comment type="pathway">
    <text evidence="4">Secondary metabolite biosynthesis; terpenoid biosynthesis.</text>
</comment>
<comment type="subcellular location">
    <subcellularLocation>
        <location evidence="3">Membrane</location>
        <topology evidence="3">Single-pass membrane protein</topology>
    </subcellularLocation>
</comment>
<comment type="miscellaneous">
    <text evidence="4">The macrophorins cluster contains a single gene insertion (encoding for the terpene cyclase macJ) compared with the yanuthone cluster that produces the linear compound yanuthone.</text>
</comment>
<comment type="similarity">
    <text evidence="6">Belongs to the cytochrome P450 family.</text>
</comment>
<dbReference type="EC" id="1.-.-.-" evidence="1"/>
<dbReference type="EMBL" id="MF989996">
    <property type="protein sequence ID" value="AVK70097.1"/>
    <property type="molecule type" value="Genomic_DNA"/>
</dbReference>
<dbReference type="EMBL" id="MH388470">
    <property type="protein sequence ID" value="QBC75451.1"/>
    <property type="molecule type" value="Genomic_DNA"/>
</dbReference>
<dbReference type="SMR" id="A0A2P1DP94"/>
<dbReference type="UniPathway" id="UPA00213"/>
<dbReference type="GO" id="GO:0016020">
    <property type="term" value="C:membrane"/>
    <property type="evidence" value="ECO:0007669"/>
    <property type="project" value="UniProtKB-SubCell"/>
</dbReference>
<dbReference type="GO" id="GO:0020037">
    <property type="term" value="F:heme binding"/>
    <property type="evidence" value="ECO:0007669"/>
    <property type="project" value="InterPro"/>
</dbReference>
<dbReference type="GO" id="GO:0005506">
    <property type="term" value="F:iron ion binding"/>
    <property type="evidence" value="ECO:0007669"/>
    <property type="project" value="InterPro"/>
</dbReference>
<dbReference type="GO" id="GO:0004497">
    <property type="term" value="F:monooxygenase activity"/>
    <property type="evidence" value="ECO:0007669"/>
    <property type="project" value="UniProtKB-KW"/>
</dbReference>
<dbReference type="GO" id="GO:0016705">
    <property type="term" value="F:oxidoreductase activity, acting on paired donors, with incorporation or reduction of molecular oxygen"/>
    <property type="evidence" value="ECO:0007669"/>
    <property type="project" value="InterPro"/>
</dbReference>
<dbReference type="GO" id="GO:0043386">
    <property type="term" value="P:mycotoxin biosynthetic process"/>
    <property type="evidence" value="ECO:0007669"/>
    <property type="project" value="UniProtKB-ARBA"/>
</dbReference>
<dbReference type="GO" id="GO:0016114">
    <property type="term" value="P:terpenoid biosynthetic process"/>
    <property type="evidence" value="ECO:0007669"/>
    <property type="project" value="UniProtKB-UniPathway"/>
</dbReference>
<dbReference type="CDD" id="cd11065">
    <property type="entry name" value="CYP64-like"/>
    <property type="match status" value="1"/>
</dbReference>
<dbReference type="Gene3D" id="1.10.630.10">
    <property type="entry name" value="Cytochrome P450"/>
    <property type="match status" value="1"/>
</dbReference>
<dbReference type="InterPro" id="IPR001128">
    <property type="entry name" value="Cyt_P450"/>
</dbReference>
<dbReference type="InterPro" id="IPR002401">
    <property type="entry name" value="Cyt_P450_E_grp-I"/>
</dbReference>
<dbReference type="InterPro" id="IPR036396">
    <property type="entry name" value="Cyt_P450_sf"/>
</dbReference>
<dbReference type="InterPro" id="IPR050364">
    <property type="entry name" value="Cytochrome_P450_fung"/>
</dbReference>
<dbReference type="PANTHER" id="PTHR46300:SF2">
    <property type="entry name" value="CYTOCHROME P450 MONOOXYGENASE ALNH-RELATED"/>
    <property type="match status" value="1"/>
</dbReference>
<dbReference type="PANTHER" id="PTHR46300">
    <property type="entry name" value="P450, PUTATIVE (EUROFUNG)-RELATED-RELATED"/>
    <property type="match status" value="1"/>
</dbReference>
<dbReference type="Pfam" id="PF00067">
    <property type="entry name" value="p450"/>
    <property type="match status" value="1"/>
</dbReference>
<dbReference type="PRINTS" id="PR00463">
    <property type="entry name" value="EP450I"/>
</dbReference>
<dbReference type="SUPFAM" id="SSF48264">
    <property type="entry name" value="Cytochrome P450"/>
    <property type="match status" value="1"/>
</dbReference>
<protein>
    <recommendedName>
        <fullName evidence="5">Cytochrome P450 monooxygenase macC</fullName>
        <ecNumber evidence="1">1.-.-.-</ecNumber>
    </recommendedName>
    <alternativeName>
        <fullName evidence="5">Macrophorins biosynthesis cluster protein C</fullName>
    </alternativeName>
</protein>
<evidence type="ECO:0000250" key="1">
    <source>
        <dbReference type="UniProtKB" id="G3Y416"/>
    </source>
</evidence>
<evidence type="ECO:0000250" key="2">
    <source>
        <dbReference type="UniProtKB" id="P04798"/>
    </source>
</evidence>
<evidence type="ECO:0000255" key="3"/>
<evidence type="ECO:0000269" key="4">
    <source>
    </source>
</evidence>
<evidence type="ECO:0000303" key="5">
    <source>
    </source>
</evidence>
<evidence type="ECO:0000305" key="6"/>